<name>ATPF_RHORU</name>
<gene>
    <name evidence="1" type="primary">atpF</name>
</gene>
<comment type="function">
    <text evidence="1">F(1)F(0) ATP synthase produces ATP from ADP in the presence of a proton or sodium gradient. F-type ATPases consist of two structural domains, F(1) containing the extramembraneous catalytic core and F(0) containing the membrane proton channel, linked together by a central stalk and a peripheral stalk. During catalysis, ATP synthesis in the catalytic domain of F(1) is coupled via a rotary mechanism of the central stalk subunits to proton translocation.</text>
</comment>
<comment type="function">
    <text evidence="1">Component of the F(0) channel, it forms part of the peripheral stalk, linking F(1) to F(0).</text>
</comment>
<comment type="subunit">
    <text evidence="3">F-type ATPases have 2 components, F(1) - the catalytic core - and F(0) - the membrane proton channel. F(1) has five subunits: alpha(3), beta(3), gamma(1), delta(1), epsilon(1). F(0) has four main subunits: a(1), b(1), b'(1) and c(10-14). The alpha and beta chains form an alternating ring which encloses part of the gamma chain. F(1) is attached to F(0) by a central stalk formed by the gamma and epsilon chains, while a peripheral stalk is formed by the delta, b and b' chains (Probable).</text>
</comment>
<comment type="subcellular location">
    <subcellularLocation>
        <location evidence="2">Cellular chromatophore membrane</location>
        <topology evidence="1 2">Single-pass membrane protein</topology>
    </subcellularLocation>
</comment>
<comment type="similarity">
    <text evidence="1">Belongs to the ATPase B chain family.</text>
</comment>
<evidence type="ECO:0000255" key="1">
    <source>
        <dbReference type="HAMAP-Rule" id="MF_01398"/>
    </source>
</evidence>
<evidence type="ECO:0000269" key="2">
    <source>
    </source>
</evidence>
<evidence type="ECO:0000305" key="3"/>
<protein>
    <recommendedName>
        <fullName evidence="1">ATP synthase subunit b</fullName>
    </recommendedName>
    <alternativeName>
        <fullName evidence="1">ATP synthase F(0) sector subunit b</fullName>
    </alternativeName>
    <alternativeName>
        <fullName evidence="1">ATPase subunit I</fullName>
    </alternativeName>
    <alternativeName>
        <fullName evidence="1">F-type ATPase subunit b</fullName>
        <shortName evidence="1">F-ATPase subunit b</shortName>
    </alternativeName>
</protein>
<sequence length="182" mass="19578">MISLALAAETAEHGGEAASHGGLFADPAFWVSIAFLMVVGFVYIKAKNKILGALDGRGAAVKAKLDEARKLRDDAQALLAEYQRRQRDAMKEADEIIRHAKDEAARLRAKAEADLEASIRRREQQAVDRIAQAEAQALAQVRNEAVDVAVSAARSLMAGSLAKADQNRLIDAAIADLPGKLH</sequence>
<proteinExistence type="evidence at protein level"/>
<accession>P15013</accession>
<dbReference type="EMBL" id="M37308">
    <property type="protein sequence ID" value="AAA26458.1"/>
    <property type="molecule type" value="Genomic_DNA"/>
</dbReference>
<dbReference type="EMBL" id="X12757">
    <property type="protein sequence ID" value="CAA31249.1"/>
    <property type="molecule type" value="Genomic_DNA"/>
</dbReference>
<dbReference type="PIR" id="S01150">
    <property type="entry name" value="S01150"/>
</dbReference>
<dbReference type="RefSeq" id="WP_011390991.1">
    <property type="nucleotide sequence ID" value="NZ_DAMDTZ010000099.1"/>
</dbReference>
<dbReference type="SMR" id="P15013"/>
<dbReference type="OMA" id="KVPGMMA"/>
<dbReference type="GO" id="GO:0005886">
    <property type="term" value="C:plasma membrane"/>
    <property type="evidence" value="ECO:0007669"/>
    <property type="project" value="UniProtKB-UniRule"/>
</dbReference>
<dbReference type="GO" id="GO:0042717">
    <property type="term" value="C:plasma membrane-derived chromatophore membrane"/>
    <property type="evidence" value="ECO:0007669"/>
    <property type="project" value="UniProtKB-SubCell"/>
</dbReference>
<dbReference type="GO" id="GO:0045259">
    <property type="term" value="C:proton-transporting ATP synthase complex"/>
    <property type="evidence" value="ECO:0007669"/>
    <property type="project" value="UniProtKB-KW"/>
</dbReference>
<dbReference type="GO" id="GO:0046933">
    <property type="term" value="F:proton-transporting ATP synthase activity, rotational mechanism"/>
    <property type="evidence" value="ECO:0007669"/>
    <property type="project" value="UniProtKB-UniRule"/>
</dbReference>
<dbReference type="GO" id="GO:0046961">
    <property type="term" value="F:proton-transporting ATPase activity, rotational mechanism"/>
    <property type="evidence" value="ECO:0007669"/>
    <property type="project" value="TreeGrafter"/>
</dbReference>
<dbReference type="CDD" id="cd06503">
    <property type="entry name" value="ATP-synt_Fo_b"/>
    <property type="match status" value="1"/>
</dbReference>
<dbReference type="HAMAP" id="MF_01398">
    <property type="entry name" value="ATP_synth_b_bprime"/>
    <property type="match status" value="1"/>
</dbReference>
<dbReference type="InterPro" id="IPR002146">
    <property type="entry name" value="ATP_synth_b/b'su_bac/chlpt"/>
</dbReference>
<dbReference type="InterPro" id="IPR050059">
    <property type="entry name" value="ATP_synthase_B_chain"/>
</dbReference>
<dbReference type="PANTHER" id="PTHR33445:SF1">
    <property type="entry name" value="ATP SYNTHASE SUBUNIT B"/>
    <property type="match status" value="1"/>
</dbReference>
<dbReference type="PANTHER" id="PTHR33445">
    <property type="entry name" value="ATP SYNTHASE SUBUNIT B', CHLOROPLASTIC"/>
    <property type="match status" value="1"/>
</dbReference>
<dbReference type="Pfam" id="PF00430">
    <property type="entry name" value="ATP-synt_B"/>
    <property type="match status" value="1"/>
</dbReference>
<organism>
    <name type="scientific">Rhodospirillum rubrum</name>
    <dbReference type="NCBI Taxonomy" id="1085"/>
    <lineage>
        <taxon>Bacteria</taxon>
        <taxon>Pseudomonadati</taxon>
        <taxon>Pseudomonadota</taxon>
        <taxon>Alphaproteobacteria</taxon>
        <taxon>Rhodospirillales</taxon>
        <taxon>Rhodospirillaceae</taxon>
        <taxon>Rhodospirillum</taxon>
    </lineage>
</organism>
<reference key="1">
    <citation type="journal article" date="1988" name="Biochem. J.">
        <title>DNA sequence of a gene cluster coding for subunits of the F0 membrane sector of ATP synthase in Rhodospirillum rubrum. Support for modular evolution of the F1 and F0 sectors.</title>
        <authorList>
            <person name="Falk G."/>
            <person name="Walker J.E."/>
        </authorList>
    </citation>
    <scope>NUCLEOTIDE SEQUENCE [GENOMIC DNA]</scope>
    <scope>PRELIMINARY PROTEIN SEQUENCE</scope>
    <scope>SUBCELLULAR LOCATION</scope>
</reference>
<feature type="propeptide" id="PRO_0000002633">
    <location>
        <begin position="1"/>
        <end position="7"/>
    </location>
</feature>
<feature type="chain" id="PRO_0000002634" description="ATP synthase subunit b">
    <location>
        <begin position="8"/>
        <end position="182"/>
    </location>
</feature>
<feature type="transmembrane region" description="Helical" evidence="1">
    <location>
        <begin position="24"/>
        <end position="44"/>
    </location>
</feature>
<keyword id="KW-0066">ATP synthesis</keyword>
<keyword id="KW-0138">CF(0)</keyword>
<keyword id="KW-0903">Direct protein sequencing</keyword>
<keyword id="KW-0375">Hydrogen ion transport</keyword>
<keyword id="KW-0406">Ion transport</keyword>
<keyword id="KW-0472">Membrane</keyword>
<keyword id="KW-0812">Transmembrane</keyword>
<keyword id="KW-1133">Transmembrane helix</keyword>
<keyword id="KW-0813">Transport</keyword>